<accession>Q8NXL7</accession>
<comment type="similarity">
    <text evidence="1">Belongs to the NAD(P)-dependent epimerase/dehydratase family. SDR39U1 subfamily.</text>
</comment>
<organism>
    <name type="scientific">Staphylococcus aureus (strain MW2)</name>
    <dbReference type="NCBI Taxonomy" id="196620"/>
    <lineage>
        <taxon>Bacteria</taxon>
        <taxon>Bacillati</taxon>
        <taxon>Bacillota</taxon>
        <taxon>Bacilli</taxon>
        <taxon>Bacillales</taxon>
        <taxon>Staphylococcaceae</taxon>
        <taxon>Staphylococcus</taxon>
    </lineage>
</organism>
<dbReference type="EMBL" id="BA000033">
    <property type="protein sequence ID" value="BAB94596.1"/>
    <property type="molecule type" value="Genomic_DNA"/>
</dbReference>
<dbReference type="RefSeq" id="WP_000816305.1">
    <property type="nucleotide sequence ID" value="NC_003923.1"/>
</dbReference>
<dbReference type="SMR" id="Q8NXL7"/>
<dbReference type="KEGG" id="sam:MW0731"/>
<dbReference type="HOGENOM" id="CLU_047373_0_3_9"/>
<dbReference type="Gene3D" id="3.40.50.720">
    <property type="entry name" value="NAD(P)-binding Rossmann-like Domain"/>
    <property type="match status" value="1"/>
</dbReference>
<dbReference type="InterPro" id="IPR013549">
    <property type="entry name" value="DUF1731"/>
</dbReference>
<dbReference type="InterPro" id="IPR001509">
    <property type="entry name" value="Epimerase_deHydtase"/>
</dbReference>
<dbReference type="InterPro" id="IPR036291">
    <property type="entry name" value="NAD(P)-bd_dom_sf"/>
</dbReference>
<dbReference type="InterPro" id="IPR010099">
    <property type="entry name" value="SDR39U1"/>
</dbReference>
<dbReference type="NCBIfam" id="TIGR01777">
    <property type="entry name" value="yfcH"/>
    <property type="match status" value="1"/>
</dbReference>
<dbReference type="PANTHER" id="PTHR11092:SF0">
    <property type="entry name" value="EPIMERASE FAMILY PROTEIN SDR39U1"/>
    <property type="match status" value="1"/>
</dbReference>
<dbReference type="PANTHER" id="PTHR11092">
    <property type="entry name" value="SUGAR NUCLEOTIDE EPIMERASE RELATED"/>
    <property type="match status" value="1"/>
</dbReference>
<dbReference type="Pfam" id="PF08338">
    <property type="entry name" value="DUF1731"/>
    <property type="match status" value="1"/>
</dbReference>
<dbReference type="Pfam" id="PF01370">
    <property type="entry name" value="Epimerase"/>
    <property type="match status" value="1"/>
</dbReference>
<dbReference type="SUPFAM" id="SSF51735">
    <property type="entry name" value="NAD(P)-binding Rossmann-fold domains"/>
    <property type="match status" value="1"/>
</dbReference>
<protein>
    <recommendedName>
        <fullName>Epimerase family protein MW0731</fullName>
    </recommendedName>
</protein>
<feature type="chain" id="PRO_0000274156" description="Epimerase family protein MW0731">
    <location>
        <begin position="1"/>
        <end position="300"/>
    </location>
</feature>
<sequence>MKQYLITGGTGMVGSQLVNEIKKSDSHITILTRHDQISNDKKISYVNWAKSGWEHKVPQNIDVVINLAGATLNKRWTPEYKQTLMLSRIQSTQALYELFKSRNKAPKVLFNASATGYYPPDLFMSYTEVYKTLPFDFLSDIVYQWERFAQQFEQLGTRVVIGRFGMILSNEGGALQTMKLPYKYYIGGRLGSGQQWYSWIHINDLIQAILFLINNESASGPFNLTAPIPERQNLFGYTLARAMHKPHETWAPSLAMRLILGQMSTVVLDTQKVLPNKIQALGFQFKYSNLKMALEDLIKE</sequence>
<gene>
    <name type="ordered locus">MW0731</name>
</gene>
<proteinExistence type="inferred from homology"/>
<name>Y731_STAAW</name>
<reference key="1">
    <citation type="journal article" date="2002" name="Lancet">
        <title>Genome and virulence determinants of high virulence community-acquired MRSA.</title>
        <authorList>
            <person name="Baba T."/>
            <person name="Takeuchi F."/>
            <person name="Kuroda M."/>
            <person name="Yuzawa H."/>
            <person name="Aoki K."/>
            <person name="Oguchi A."/>
            <person name="Nagai Y."/>
            <person name="Iwama N."/>
            <person name="Asano K."/>
            <person name="Naimi T."/>
            <person name="Kuroda H."/>
            <person name="Cui L."/>
            <person name="Yamamoto K."/>
            <person name="Hiramatsu K."/>
        </authorList>
    </citation>
    <scope>NUCLEOTIDE SEQUENCE [LARGE SCALE GENOMIC DNA]</scope>
    <source>
        <strain>MW2</strain>
    </source>
</reference>
<evidence type="ECO:0000305" key="1"/>